<keyword id="KW-0269">Exonuclease</keyword>
<keyword id="KW-0378">Hydrolase</keyword>
<keyword id="KW-0460">Magnesium</keyword>
<keyword id="KW-0479">Metal-binding</keyword>
<keyword id="KW-0540">Nuclease</keyword>
<keyword id="KW-0539">Nucleus</keyword>
<keyword id="KW-0597">Phosphoprotein</keyword>
<proteinExistence type="inferred from homology"/>
<organism>
    <name type="scientific">Drosophila yakuba</name>
    <name type="common">Fruit fly</name>
    <dbReference type="NCBI Taxonomy" id="7245"/>
    <lineage>
        <taxon>Eukaryota</taxon>
        <taxon>Metazoa</taxon>
        <taxon>Ecdysozoa</taxon>
        <taxon>Arthropoda</taxon>
        <taxon>Hexapoda</taxon>
        <taxon>Insecta</taxon>
        <taxon>Pterygota</taxon>
        <taxon>Neoptera</taxon>
        <taxon>Endopterygota</taxon>
        <taxon>Diptera</taxon>
        <taxon>Brachycera</taxon>
        <taxon>Muscomorpha</taxon>
        <taxon>Ephydroidea</taxon>
        <taxon>Drosophilidae</taxon>
        <taxon>Drosophila</taxon>
        <taxon>Sophophora</taxon>
    </lineage>
</organism>
<comment type="function">
    <text evidence="2">Has exonuclease activity on both single-stranded and duplex templates bearing overhangs, but not blunt ended duplex DNA, and cleaves in a 3'-5' direction. Essential for the formation of DNA replication focal centers. Has an important role in maintaining genome stability.</text>
</comment>
<comment type="subcellular location">
    <subcellularLocation>
        <location evidence="2">Nucleus</location>
    </subcellularLocation>
</comment>
<comment type="similarity">
    <text evidence="5">Belongs to the WRNexo family.</text>
</comment>
<feature type="chain" id="PRO_0000399384" description="3'-5' exonuclease">
    <location>
        <begin position="1"/>
        <end position="354"/>
    </location>
</feature>
<feature type="domain" description="3'-5' exonuclease" evidence="3">
    <location>
        <begin position="146"/>
        <end position="314"/>
    </location>
</feature>
<feature type="region of interest" description="Disordered" evidence="4">
    <location>
        <begin position="1"/>
        <end position="120"/>
    </location>
</feature>
<feature type="compositionally biased region" description="Basic and acidic residues" evidence="4">
    <location>
        <begin position="36"/>
        <end position="50"/>
    </location>
</feature>
<feature type="compositionally biased region" description="Basic residues" evidence="4">
    <location>
        <begin position="59"/>
        <end position="70"/>
    </location>
</feature>
<feature type="compositionally biased region" description="Basic and acidic residues" evidence="4">
    <location>
        <begin position="71"/>
        <end position="91"/>
    </location>
</feature>
<feature type="binding site" evidence="2">
    <location>
        <position position="163"/>
    </location>
    <ligand>
        <name>Mg(2+)</name>
        <dbReference type="ChEBI" id="CHEBI:18420"/>
        <label>1</label>
        <note>catalytic</note>
    </ligand>
</feature>
<feature type="binding site" evidence="2">
    <location>
        <position position="163"/>
    </location>
    <ligand>
        <name>Mg(2+)</name>
        <dbReference type="ChEBI" id="CHEBI:18420"/>
        <label>2</label>
        <note>catalytic</note>
    </ligand>
</feature>
<feature type="binding site" evidence="2">
    <location>
        <position position="165"/>
    </location>
    <ligand>
        <name>Mg(2+)</name>
        <dbReference type="ChEBI" id="CHEBI:18420"/>
        <label>1</label>
        <note>catalytic</note>
    </ligand>
</feature>
<feature type="binding site" evidence="1">
    <location>
        <position position="301"/>
    </location>
    <ligand>
        <name>Mg(2+)</name>
        <dbReference type="ChEBI" id="CHEBI:18420"/>
        <label>1</label>
        <note>catalytic</note>
    </ligand>
</feature>
<feature type="modified residue" description="Phosphoserine" evidence="2">
    <location>
        <position position="104"/>
    </location>
</feature>
<feature type="modified residue" description="Phosphoserine" evidence="2">
    <location>
        <position position="110"/>
    </location>
</feature>
<feature type="modified residue" description="Phosphoserine" evidence="2">
    <location>
        <position position="112"/>
    </location>
</feature>
<dbReference type="EC" id="3.1.11.-"/>
<dbReference type="EMBL" id="CM000160">
    <property type="protein sequence ID" value="EDW95895.1"/>
    <property type="molecule type" value="Genomic_DNA"/>
</dbReference>
<dbReference type="RefSeq" id="XP_002096183.2">
    <property type="nucleotide sequence ID" value="XM_002096147.2"/>
</dbReference>
<dbReference type="SMR" id="B4PLB3"/>
<dbReference type="GeneID" id="6535554"/>
<dbReference type="KEGG" id="dya:Dyak_GE25207"/>
<dbReference type="eggNOG" id="KOG4373">
    <property type="taxonomic scope" value="Eukaryota"/>
</dbReference>
<dbReference type="HOGENOM" id="CLU_845357_0_0_1"/>
<dbReference type="OMA" id="CCYVYQL"/>
<dbReference type="OrthoDB" id="10261556at2759"/>
<dbReference type="PhylomeDB" id="B4PLB3"/>
<dbReference type="ChiTaRS" id="WRNexo">
    <property type="organism name" value="fly"/>
</dbReference>
<dbReference type="Proteomes" id="UP000002282">
    <property type="component" value="Chromosome 3R"/>
</dbReference>
<dbReference type="GO" id="GO:0005634">
    <property type="term" value="C:nucleus"/>
    <property type="evidence" value="ECO:0000250"/>
    <property type="project" value="UniProtKB"/>
</dbReference>
<dbReference type="GO" id="GO:0008408">
    <property type="term" value="F:3'-5' exonuclease activity"/>
    <property type="evidence" value="ECO:0000250"/>
    <property type="project" value="UniProtKB"/>
</dbReference>
<dbReference type="GO" id="GO:0046872">
    <property type="term" value="F:metal ion binding"/>
    <property type="evidence" value="ECO:0007669"/>
    <property type="project" value="UniProtKB-KW"/>
</dbReference>
<dbReference type="GO" id="GO:0003676">
    <property type="term" value="F:nucleic acid binding"/>
    <property type="evidence" value="ECO:0007669"/>
    <property type="project" value="InterPro"/>
</dbReference>
<dbReference type="GO" id="GO:0045950">
    <property type="term" value="P:negative regulation of mitotic recombination"/>
    <property type="evidence" value="ECO:0000250"/>
    <property type="project" value="UniProtKB"/>
</dbReference>
<dbReference type="GO" id="GO:0006139">
    <property type="term" value="P:nucleobase-containing compound metabolic process"/>
    <property type="evidence" value="ECO:0007669"/>
    <property type="project" value="InterPro"/>
</dbReference>
<dbReference type="CDD" id="cd06141">
    <property type="entry name" value="WRN_exo"/>
    <property type="match status" value="1"/>
</dbReference>
<dbReference type="FunFam" id="3.30.420.10:FF:000104">
    <property type="entry name" value="Werner Syndrome-like exonuclease"/>
    <property type="match status" value="1"/>
</dbReference>
<dbReference type="Gene3D" id="3.30.420.10">
    <property type="entry name" value="Ribonuclease H-like superfamily/Ribonuclease H"/>
    <property type="match status" value="1"/>
</dbReference>
<dbReference type="InterPro" id="IPR002562">
    <property type="entry name" value="3'-5'_exonuclease_dom"/>
</dbReference>
<dbReference type="InterPro" id="IPR051132">
    <property type="entry name" value="3-5_Exonuclease_domain"/>
</dbReference>
<dbReference type="InterPro" id="IPR012337">
    <property type="entry name" value="RNaseH-like_sf"/>
</dbReference>
<dbReference type="InterPro" id="IPR036397">
    <property type="entry name" value="RNaseH_sf"/>
</dbReference>
<dbReference type="PANTHER" id="PTHR13620:SF109">
    <property type="entry name" value="3'-5' EXONUCLEASE"/>
    <property type="match status" value="1"/>
</dbReference>
<dbReference type="PANTHER" id="PTHR13620">
    <property type="entry name" value="3-5 EXONUCLEASE"/>
    <property type="match status" value="1"/>
</dbReference>
<dbReference type="Pfam" id="PF01612">
    <property type="entry name" value="DNA_pol_A_exo1"/>
    <property type="match status" value="1"/>
</dbReference>
<dbReference type="SMART" id="SM00474">
    <property type="entry name" value="35EXOc"/>
    <property type="match status" value="1"/>
</dbReference>
<dbReference type="SUPFAM" id="SSF53098">
    <property type="entry name" value="Ribonuclease H-like"/>
    <property type="match status" value="1"/>
</dbReference>
<evidence type="ECO:0000250" key="1">
    <source>
        <dbReference type="UniProtKB" id="Q14191"/>
    </source>
</evidence>
<evidence type="ECO:0000250" key="2">
    <source>
        <dbReference type="UniProtKB" id="Q9VE86"/>
    </source>
</evidence>
<evidence type="ECO:0000255" key="3"/>
<evidence type="ECO:0000256" key="4">
    <source>
        <dbReference type="SAM" id="MobiDB-lite"/>
    </source>
</evidence>
<evidence type="ECO:0000305" key="5"/>
<evidence type="ECO:0000312" key="6">
    <source>
        <dbReference type="EMBL" id="EDW95895.1"/>
    </source>
</evidence>
<gene>
    <name evidence="2" type="primary">WRNexo</name>
    <name type="ORF">GE25207</name>
</gene>
<accession>B4PLB3</accession>
<sequence>MEKYLIKMPIKSKANAVPEEKAVVKKGTPKMTGKVTKKDTPKELKDKENAGEDNTPKQTKGRPGRPAVKRKNLDNPDAKAEKKATEEENPPKRRSSRLTRSTRSMAEDGSPSPEKEKPEKLPFIKYKGAIKYYTENQDIAASADDVLQWVEKQKDEVVPMAFDMEWPFSFQTGPGKSAVIQICVDEKCCYIYQLTNLKKLPAVLVALINHPKVRLHGVNIKNDFRKLARDFPEVSAEPLIEKCVDLGLWCNEVCETGGRWSLERLTNFIAKKAMDKSKKVRMSKWHVIPLDENQLMYAAIDVYIGQVIYRELERREKAKIKNEAEFKENNGEAAFKAMKTLGETFLTKINEVTL</sequence>
<reference evidence="6" key="1">
    <citation type="journal article" date="2007" name="Nature">
        <title>Evolution of genes and genomes on the Drosophila phylogeny.</title>
        <authorList>
            <consortium name="Drosophila 12 genomes consortium"/>
        </authorList>
    </citation>
    <scope>NUCLEOTIDE SEQUENCE [LARGE SCALE GENOMIC DNA]</scope>
    <source>
        <strain evidence="6">Tai18E2 / Tucson 14021-0261.01</strain>
    </source>
</reference>
<protein>
    <recommendedName>
        <fullName evidence="2">3'-5' exonuclease</fullName>
        <ecNumber>3.1.11.-</ecNumber>
    </recommendedName>
    <alternativeName>
        <fullName>Werner Syndrome-like exonuclease</fullName>
    </alternativeName>
</protein>
<name>WRNXO_DROYA</name>